<organism>
    <name type="scientific">Shigella boydii serotype 4 (strain Sb227)</name>
    <dbReference type="NCBI Taxonomy" id="300268"/>
    <lineage>
        <taxon>Bacteria</taxon>
        <taxon>Pseudomonadati</taxon>
        <taxon>Pseudomonadota</taxon>
        <taxon>Gammaproteobacteria</taxon>
        <taxon>Enterobacterales</taxon>
        <taxon>Enterobacteriaceae</taxon>
        <taxon>Shigella</taxon>
    </lineage>
</organism>
<accession>Q31UE5</accession>
<sequence length="497" mass="55632">MDAMKYNDLRDFLTLLEQQGELKRITLPVDPHLEITEIADRTLRAGGPALLFENPKGYSMPVLCNLFGTPKRVAMGMGQEDVSALREVGKLLAFLKEPEPPKGFRDLFDKLPQFKQVLNMPTKRLRGVPCQQKIVSGDDVDLNRIPIMTCWPEDAAPLITWGLTVTRGPHKERQNLGIYRQQLIGKNKLIMRWLSHRGGALDYQEWCAAHPGERFPVSVALGADPATILGAVTPVPDTLSEYAFAGLLRGTKTEVVKCISNDLEVPASAEIVLEGYIEQGETAPEGPYGDHTGYYNEVDSFPVFTVTHITQREDAIYHSTYTGRPPDEPAVLGVALNEVFVPILQKQFPEIVDFYLPPEGCSYRLAVVTIKKQYAGHAKRVMMGVWSFLRQFMYTKFVIVCDDDVNARDWNDVIWAITTRMDPARDTVLVENTPIDYLDFASPVSGLGSKMGLDATNKWPGETQREWGRPIKKDPDVVAHIDAIWDELAIFNNGKSA</sequence>
<gene>
    <name evidence="1" type="primary">ubiD</name>
    <name type="ordered locus">SBO_3855</name>
</gene>
<comment type="function">
    <text evidence="1">Catalyzes the decarboxylation of 3-octaprenyl-4-hydroxy benzoate to 2-octaprenylphenol, an intermediate step in ubiquinone biosynthesis.</text>
</comment>
<comment type="catalytic activity">
    <reaction evidence="1">
        <text>a 4-hydroxy-3-(all-trans-polyprenyl)benzoate + H(+) = a 2-(all-trans-polyprenyl)phenol + CO2</text>
        <dbReference type="Rhea" id="RHEA:41680"/>
        <dbReference type="Rhea" id="RHEA-COMP:9514"/>
        <dbReference type="Rhea" id="RHEA-COMP:9516"/>
        <dbReference type="ChEBI" id="CHEBI:1269"/>
        <dbReference type="ChEBI" id="CHEBI:15378"/>
        <dbReference type="ChEBI" id="CHEBI:16526"/>
        <dbReference type="ChEBI" id="CHEBI:78396"/>
        <dbReference type="EC" id="4.1.1.98"/>
    </reaction>
</comment>
<comment type="cofactor">
    <cofactor evidence="1">
        <name>prenylated FMN</name>
        <dbReference type="ChEBI" id="CHEBI:87746"/>
    </cofactor>
    <text evidence="1">Binds 1 prenylated FMN per subunit.</text>
</comment>
<comment type="cofactor">
    <cofactor evidence="1">
        <name>Mn(2+)</name>
        <dbReference type="ChEBI" id="CHEBI:29035"/>
    </cofactor>
</comment>
<comment type="pathway">
    <text evidence="1">Cofactor biosynthesis; ubiquinone biosynthesis.</text>
</comment>
<comment type="subunit">
    <text evidence="1">Homohexamer.</text>
</comment>
<comment type="subcellular location">
    <subcellularLocation>
        <location evidence="1">Cell membrane</location>
        <topology evidence="1">Peripheral membrane protein</topology>
    </subcellularLocation>
</comment>
<comment type="similarity">
    <text evidence="1">Belongs to the UbiD family.</text>
</comment>
<protein>
    <recommendedName>
        <fullName evidence="1">3-octaprenyl-4-hydroxybenzoate carboxy-lyase</fullName>
        <ecNumber evidence="1">4.1.1.98</ecNumber>
    </recommendedName>
    <alternativeName>
        <fullName evidence="1">Polyprenyl p-hydroxybenzoate decarboxylase</fullName>
    </alternativeName>
</protein>
<feature type="chain" id="PRO_0000267699" description="3-octaprenyl-4-hydroxybenzoate carboxy-lyase">
    <location>
        <begin position="1"/>
        <end position="497"/>
    </location>
</feature>
<feature type="active site" description="Proton donor" evidence="1">
    <location>
        <position position="290"/>
    </location>
</feature>
<feature type="binding site" evidence="1">
    <location>
        <position position="175"/>
    </location>
    <ligand>
        <name>Mn(2+)</name>
        <dbReference type="ChEBI" id="CHEBI:29035"/>
    </ligand>
</feature>
<feature type="binding site" evidence="1">
    <location>
        <begin position="178"/>
        <end position="180"/>
    </location>
    <ligand>
        <name>prenylated FMN</name>
        <dbReference type="ChEBI" id="CHEBI:87746"/>
    </ligand>
</feature>
<feature type="binding site" evidence="1">
    <location>
        <begin position="192"/>
        <end position="194"/>
    </location>
    <ligand>
        <name>prenylated FMN</name>
        <dbReference type="ChEBI" id="CHEBI:87746"/>
    </ligand>
</feature>
<feature type="binding site" evidence="1">
    <location>
        <begin position="197"/>
        <end position="198"/>
    </location>
    <ligand>
        <name>prenylated FMN</name>
        <dbReference type="ChEBI" id="CHEBI:87746"/>
    </ligand>
</feature>
<feature type="binding site" evidence="1">
    <location>
        <position position="241"/>
    </location>
    <ligand>
        <name>Mn(2+)</name>
        <dbReference type="ChEBI" id="CHEBI:29035"/>
    </ligand>
</feature>
<keyword id="KW-1003">Cell membrane</keyword>
<keyword id="KW-0210">Decarboxylase</keyword>
<keyword id="KW-0285">Flavoprotein</keyword>
<keyword id="KW-0288">FMN</keyword>
<keyword id="KW-0456">Lyase</keyword>
<keyword id="KW-0464">Manganese</keyword>
<keyword id="KW-0472">Membrane</keyword>
<keyword id="KW-0479">Metal-binding</keyword>
<keyword id="KW-0831">Ubiquinone biosynthesis</keyword>
<dbReference type="EC" id="4.1.1.98" evidence="1"/>
<dbReference type="EMBL" id="CP000036">
    <property type="protein sequence ID" value="ABB68313.1"/>
    <property type="molecule type" value="Genomic_DNA"/>
</dbReference>
<dbReference type="RefSeq" id="WP_000339817.1">
    <property type="nucleotide sequence ID" value="NC_007613.1"/>
</dbReference>
<dbReference type="SMR" id="Q31UE5"/>
<dbReference type="KEGG" id="sbo:SBO_3855"/>
<dbReference type="HOGENOM" id="CLU_023348_4_1_6"/>
<dbReference type="UniPathway" id="UPA00232"/>
<dbReference type="Proteomes" id="UP000007067">
    <property type="component" value="Chromosome"/>
</dbReference>
<dbReference type="GO" id="GO:0005829">
    <property type="term" value="C:cytosol"/>
    <property type="evidence" value="ECO:0007669"/>
    <property type="project" value="TreeGrafter"/>
</dbReference>
<dbReference type="GO" id="GO:0005886">
    <property type="term" value="C:plasma membrane"/>
    <property type="evidence" value="ECO:0007669"/>
    <property type="project" value="UniProtKB-SubCell"/>
</dbReference>
<dbReference type="GO" id="GO:0008694">
    <property type="term" value="F:3-octaprenyl-4-hydroxybenzoate carboxy-lyase activity"/>
    <property type="evidence" value="ECO:0007669"/>
    <property type="project" value="UniProtKB-UniRule"/>
</dbReference>
<dbReference type="GO" id="GO:0046872">
    <property type="term" value="F:metal ion binding"/>
    <property type="evidence" value="ECO:0007669"/>
    <property type="project" value="UniProtKB-KW"/>
</dbReference>
<dbReference type="GO" id="GO:0006744">
    <property type="term" value="P:ubiquinone biosynthetic process"/>
    <property type="evidence" value="ECO:0007669"/>
    <property type="project" value="UniProtKB-UniRule"/>
</dbReference>
<dbReference type="FunFam" id="1.20.5.570:FF:000001">
    <property type="entry name" value="3-octaprenyl-4-hydroxybenzoate carboxy-lyase"/>
    <property type="match status" value="1"/>
</dbReference>
<dbReference type="FunFam" id="3.40.1670.10:FF:000001">
    <property type="entry name" value="3-octaprenyl-4-hydroxybenzoate carboxy-lyase"/>
    <property type="match status" value="1"/>
</dbReference>
<dbReference type="Gene3D" id="1.20.5.570">
    <property type="entry name" value="Single helix bin"/>
    <property type="match status" value="1"/>
</dbReference>
<dbReference type="Gene3D" id="3.40.1670.10">
    <property type="entry name" value="UbiD C-terminal domain-like"/>
    <property type="match status" value="1"/>
</dbReference>
<dbReference type="HAMAP" id="MF_01636">
    <property type="entry name" value="UbiD"/>
    <property type="match status" value="1"/>
</dbReference>
<dbReference type="InterPro" id="IPR002830">
    <property type="entry name" value="UbiD"/>
</dbReference>
<dbReference type="InterPro" id="IPR049381">
    <property type="entry name" value="UbiD-like_C"/>
</dbReference>
<dbReference type="InterPro" id="IPR049383">
    <property type="entry name" value="UbiD-like_N"/>
</dbReference>
<dbReference type="InterPro" id="IPR023677">
    <property type="entry name" value="UbiD_bacteria"/>
</dbReference>
<dbReference type="InterPro" id="IPR048304">
    <property type="entry name" value="UbiD_Rift_dom"/>
</dbReference>
<dbReference type="NCBIfam" id="NF008175">
    <property type="entry name" value="PRK10922.1"/>
    <property type="match status" value="1"/>
</dbReference>
<dbReference type="NCBIfam" id="TIGR00148">
    <property type="entry name" value="UbiD family decarboxylase"/>
    <property type="match status" value="1"/>
</dbReference>
<dbReference type="PANTHER" id="PTHR30108">
    <property type="entry name" value="3-OCTAPRENYL-4-HYDROXYBENZOATE CARBOXY-LYASE-RELATED"/>
    <property type="match status" value="1"/>
</dbReference>
<dbReference type="PANTHER" id="PTHR30108:SF17">
    <property type="entry name" value="FERULIC ACID DECARBOXYLASE 1"/>
    <property type="match status" value="1"/>
</dbReference>
<dbReference type="Pfam" id="PF01977">
    <property type="entry name" value="UbiD"/>
    <property type="match status" value="1"/>
</dbReference>
<dbReference type="Pfam" id="PF20696">
    <property type="entry name" value="UbiD_C"/>
    <property type="match status" value="1"/>
</dbReference>
<dbReference type="Pfam" id="PF20695">
    <property type="entry name" value="UbiD_N"/>
    <property type="match status" value="1"/>
</dbReference>
<dbReference type="SUPFAM" id="SSF50475">
    <property type="entry name" value="FMN-binding split barrel"/>
    <property type="match status" value="1"/>
</dbReference>
<dbReference type="SUPFAM" id="SSF143968">
    <property type="entry name" value="UbiD C-terminal domain-like"/>
    <property type="match status" value="1"/>
</dbReference>
<proteinExistence type="inferred from homology"/>
<reference key="1">
    <citation type="journal article" date="2005" name="Nucleic Acids Res.">
        <title>Genome dynamics and diversity of Shigella species, the etiologic agents of bacillary dysentery.</title>
        <authorList>
            <person name="Yang F."/>
            <person name="Yang J."/>
            <person name="Zhang X."/>
            <person name="Chen L."/>
            <person name="Jiang Y."/>
            <person name="Yan Y."/>
            <person name="Tang X."/>
            <person name="Wang J."/>
            <person name="Xiong Z."/>
            <person name="Dong J."/>
            <person name="Xue Y."/>
            <person name="Zhu Y."/>
            <person name="Xu X."/>
            <person name="Sun L."/>
            <person name="Chen S."/>
            <person name="Nie H."/>
            <person name="Peng J."/>
            <person name="Xu J."/>
            <person name="Wang Y."/>
            <person name="Yuan Z."/>
            <person name="Wen Y."/>
            <person name="Yao Z."/>
            <person name="Shen Y."/>
            <person name="Qiang B."/>
            <person name="Hou Y."/>
            <person name="Yu J."/>
            <person name="Jin Q."/>
        </authorList>
    </citation>
    <scope>NUCLEOTIDE SEQUENCE [LARGE SCALE GENOMIC DNA]</scope>
    <source>
        <strain>Sb227</strain>
    </source>
</reference>
<evidence type="ECO:0000255" key="1">
    <source>
        <dbReference type="HAMAP-Rule" id="MF_01636"/>
    </source>
</evidence>
<name>UBID_SHIBS</name>